<protein>
    <recommendedName>
        <fullName>Glucagon-like peptide</fullName>
        <shortName>GLP</shortName>
    </recommendedName>
</protein>
<accession>P63294</accession>
<accession>P41521</accession>
<keyword id="KW-0027">Amidation</keyword>
<keyword id="KW-0903">Direct protein sequencing</keyword>
<keyword id="KW-0964">Secreted</keyword>
<reference key="1">
    <citation type="journal article" date="1991" name="Gen. Comp. Endocrinol.">
        <title>The primary structure of glucagon-like peptide but not insulin has been conserved between the American eel, Anguilla rostrata and the European eel, Anguilla anguilla.</title>
        <authorList>
            <person name="Conlon J.M."/>
            <person name="Andrews P.C."/>
            <person name="Thim L."/>
            <person name="Moon T.W."/>
        </authorList>
    </citation>
    <scope>PROTEIN SEQUENCE</scope>
    <scope>AMIDATION AT ARG-30</scope>
    <source>
        <tissue>Pancreas</tissue>
    </source>
</reference>
<sequence length="30" mass="3376">HAEGTYTSDVSSYLQDQAAKEFVSWLKTGR</sequence>
<dbReference type="PIR" id="C61125">
    <property type="entry name" value="C61125"/>
</dbReference>
<dbReference type="SMR" id="P63294"/>
<dbReference type="GO" id="GO:0005576">
    <property type="term" value="C:extracellular region"/>
    <property type="evidence" value="ECO:0007669"/>
    <property type="project" value="UniProtKB-SubCell"/>
</dbReference>
<dbReference type="GO" id="GO:0031769">
    <property type="term" value="F:glucagon receptor binding"/>
    <property type="evidence" value="ECO:0007669"/>
    <property type="project" value="TreeGrafter"/>
</dbReference>
<dbReference type="GO" id="GO:0005179">
    <property type="term" value="F:hormone activity"/>
    <property type="evidence" value="ECO:0007669"/>
    <property type="project" value="InterPro"/>
</dbReference>
<dbReference type="GO" id="GO:0042594">
    <property type="term" value="P:response to starvation"/>
    <property type="evidence" value="ECO:0007669"/>
    <property type="project" value="TreeGrafter"/>
</dbReference>
<dbReference type="Gene3D" id="6.10.250.590">
    <property type="match status" value="1"/>
</dbReference>
<dbReference type="InterPro" id="IPR015550">
    <property type="entry name" value="Glucagon"/>
</dbReference>
<dbReference type="InterPro" id="IPR000532">
    <property type="entry name" value="Glucagon_GIP_secretin_VIP"/>
</dbReference>
<dbReference type="PANTHER" id="PTHR11418">
    <property type="entry name" value="GLUCAGON"/>
    <property type="match status" value="1"/>
</dbReference>
<dbReference type="PANTHER" id="PTHR11418:SF0">
    <property type="entry name" value="PRO-GLUCAGON"/>
    <property type="match status" value="1"/>
</dbReference>
<dbReference type="Pfam" id="PF00123">
    <property type="entry name" value="Hormone_2"/>
    <property type="match status" value="1"/>
</dbReference>
<dbReference type="SMART" id="SM00070">
    <property type="entry name" value="GLUCA"/>
    <property type="match status" value="1"/>
</dbReference>
<dbReference type="PROSITE" id="PS00260">
    <property type="entry name" value="GLUCAGON"/>
    <property type="match status" value="1"/>
</dbReference>
<organism>
    <name type="scientific">Anguilla anguilla</name>
    <name type="common">European freshwater eel</name>
    <name type="synonym">Muraena anguilla</name>
    <dbReference type="NCBI Taxonomy" id="7936"/>
    <lineage>
        <taxon>Eukaryota</taxon>
        <taxon>Metazoa</taxon>
        <taxon>Chordata</taxon>
        <taxon>Craniata</taxon>
        <taxon>Vertebrata</taxon>
        <taxon>Euteleostomi</taxon>
        <taxon>Actinopterygii</taxon>
        <taxon>Neopterygii</taxon>
        <taxon>Teleostei</taxon>
        <taxon>Anguilliformes</taxon>
        <taxon>Anguillidae</taxon>
        <taxon>Anguilla</taxon>
    </lineage>
</organism>
<evidence type="ECO:0000269" key="1">
    <source>
    </source>
</evidence>
<evidence type="ECO:0000305" key="2"/>
<feature type="peptide" id="PRO_0000043931" description="Glucagon-like peptide">
    <location>
        <begin position="1"/>
        <end position="30"/>
    </location>
</feature>
<feature type="modified residue" description="Arginine amide" evidence="1">
    <location>
        <position position="30"/>
    </location>
</feature>
<proteinExistence type="evidence at protein level"/>
<name>GLUCL_ANGAN</name>
<comment type="subcellular location">
    <subcellularLocation>
        <location>Secreted</location>
    </subcellularLocation>
</comment>
<comment type="similarity">
    <text evidence="2">Belongs to the glucagon family.</text>
</comment>